<proteinExistence type="inferred from homology"/>
<gene>
    <name evidence="1" type="primary">glyQ</name>
    <name type="ordered locus">SPJ_1375</name>
</gene>
<comment type="catalytic activity">
    <reaction evidence="1">
        <text>tRNA(Gly) + glycine + ATP = glycyl-tRNA(Gly) + AMP + diphosphate</text>
        <dbReference type="Rhea" id="RHEA:16013"/>
        <dbReference type="Rhea" id="RHEA-COMP:9664"/>
        <dbReference type="Rhea" id="RHEA-COMP:9683"/>
        <dbReference type="ChEBI" id="CHEBI:30616"/>
        <dbReference type="ChEBI" id="CHEBI:33019"/>
        <dbReference type="ChEBI" id="CHEBI:57305"/>
        <dbReference type="ChEBI" id="CHEBI:78442"/>
        <dbReference type="ChEBI" id="CHEBI:78522"/>
        <dbReference type="ChEBI" id="CHEBI:456215"/>
        <dbReference type="EC" id="6.1.1.14"/>
    </reaction>
</comment>
<comment type="subunit">
    <text evidence="1">Tetramer of two alpha and two beta subunits.</text>
</comment>
<comment type="subcellular location">
    <subcellularLocation>
        <location evidence="1">Cytoplasm</location>
    </subcellularLocation>
</comment>
<comment type="similarity">
    <text evidence="1">Belongs to the class-II aminoacyl-tRNA synthetase family.</text>
</comment>
<name>SYGA_STRZJ</name>
<dbReference type="EC" id="6.1.1.14" evidence="1"/>
<dbReference type="EMBL" id="CP000919">
    <property type="protein sequence ID" value="ACO19714.1"/>
    <property type="molecule type" value="Genomic_DNA"/>
</dbReference>
<dbReference type="RefSeq" id="WP_000038750.1">
    <property type="nucleotide sequence ID" value="NC_012466.1"/>
</dbReference>
<dbReference type="SMR" id="C1CF58"/>
<dbReference type="KEGG" id="sjj:SPJ_1375"/>
<dbReference type="HOGENOM" id="CLU_057066_1_0_9"/>
<dbReference type="Proteomes" id="UP000002206">
    <property type="component" value="Chromosome"/>
</dbReference>
<dbReference type="GO" id="GO:0005829">
    <property type="term" value="C:cytosol"/>
    <property type="evidence" value="ECO:0007669"/>
    <property type="project" value="TreeGrafter"/>
</dbReference>
<dbReference type="GO" id="GO:0005524">
    <property type="term" value="F:ATP binding"/>
    <property type="evidence" value="ECO:0007669"/>
    <property type="project" value="UniProtKB-UniRule"/>
</dbReference>
<dbReference type="GO" id="GO:0140096">
    <property type="term" value="F:catalytic activity, acting on a protein"/>
    <property type="evidence" value="ECO:0007669"/>
    <property type="project" value="UniProtKB-ARBA"/>
</dbReference>
<dbReference type="GO" id="GO:0004820">
    <property type="term" value="F:glycine-tRNA ligase activity"/>
    <property type="evidence" value="ECO:0007669"/>
    <property type="project" value="UniProtKB-UniRule"/>
</dbReference>
<dbReference type="GO" id="GO:0016740">
    <property type="term" value="F:transferase activity"/>
    <property type="evidence" value="ECO:0007669"/>
    <property type="project" value="UniProtKB-ARBA"/>
</dbReference>
<dbReference type="GO" id="GO:0006426">
    <property type="term" value="P:glycyl-tRNA aminoacylation"/>
    <property type="evidence" value="ECO:0007669"/>
    <property type="project" value="UniProtKB-UniRule"/>
</dbReference>
<dbReference type="CDD" id="cd00733">
    <property type="entry name" value="GlyRS_alpha_core"/>
    <property type="match status" value="1"/>
</dbReference>
<dbReference type="FunFam" id="3.30.930.10:FF:000006">
    <property type="entry name" value="Glycine--tRNA ligase alpha subunit"/>
    <property type="match status" value="1"/>
</dbReference>
<dbReference type="Gene3D" id="3.30.930.10">
    <property type="entry name" value="Bira Bifunctional Protein, Domain 2"/>
    <property type="match status" value="1"/>
</dbReference>
<dbReference type="Gene3D" id="1.20.58.180">
    <property type="entry name" value="Class II aaRS and biotin synthetases, domain 2"/>
    <property type="match status" value="1"/>
</dbReference>
<dbReference type="HAMAP" id="MF_00254">
    <property type="entry name" value="Gly_tRNA_synth_alpha"/>
    <property type="match status" value="1"/>
</dbReference>
<dbReference type="InterPro" id="IPR045864">
    <property type="entry name" value="aa-tRNA-synth_II/BPL/LPL"/>
</dbReference>
<dbReference type="InterPro" id="IPR006194">
    <property type="entry name" value="Gly-tRNA-synth_heterodimer"/>
</dbReference>
<dbReference type="InterPro" id="IPR002310">
    <property type="entry name" value="Gly-tRNA_ligase_asu"/>
</dbReference>
<dbReference type="NCBIfam" id="TIGR00388">
    <property type="entry name" value="glyQ"/>
    <property type="match status" value="1"/>
</dbReference>
<dbReference type="NCBIfam" id="NF006827">
    <property type="entry name" value="PRK09348.1"/>
    <property type="match status" value="1"/>
</dbReference>
<dbReference type="PANTHER" id="PTHR30075:SF2">
    <property type="entry name" value="GLYCINE--TRNA LIGASE, CHLOROPLASTIC_MITOCHONDRIAL 2"/>
    <property type="match status" value="1"/>
</dbReference>
<dbReference type="PANTHER" id="PTHR30075">
    <property type="entry name" value="GLYCYL-TRNA SYNTHETASE"/>
    <property type="match status" value="1"/>
</dbReference>
<dbReference type="Pfam" id="PF02091">
    <property type="entry name" value="tRNA-synt_2e"/>
    <property type="match status" value="1"/>
</dbReference>
<dbReference type="PRINTS" id="PR01044">
    <property type="entry name" value="TRNASYNTHGA"/>
</dbReference>
<dbReference type="SUPFAM" id="SSF55681">
    <property type="entry name" value="Class II aaRS and biotin synthetases"/>
    <property type="match status" value="1"/>
</dbReference>
<dbReference type="PROSITE" id="PS50861">
    <property type="entry name" value="AA_TRNA_LIGASE_II_GLYAB"/>
    <property type="match status" value="1"/>
</dbReference>
<organism>
    <name type="scientific">Streptococcus pneumoniae (strain JJA)</name>
    <dbReference type="NCBI Taxonomy" id="488222"/>
    <lineage>
        <taxon>Bacteria</taxon>
        <taxon>Bacillati</taxon>
        <taxon>Bacillota</taxon>
        <taxon>Bacilli</taxon>
        <taxon>Lactobacillales</taxon>
        <taxon>Streptococcaceae</taxon>
        <taxon>Streptococcus</taxon>
    </lineage>
</organism>
<protein>
    <recommendedName>
        <fullName evidence="1">Glycine--tRNA ligase alpha subunit</fullName>
        <ecNumber evidence="1">6.1.1.14</ecNumber>
    </recommendedName>
    <alternativeName>
        <fullName evidence="1">Glycyl-tRNA synthetase alpha subunit</fullName>
        <shortName evidence="1">GlyRS</shortName>
    </alternativeName>
</protein>
<sequence length="305" mass="34964">MSKKLTFQEIILTLQQFWNDQGCMLMQAYDNEKGAGTMSPYTFLRAIGPEPWNAAYVEPSRRPADGRYGENPNRLYQHHQFQVVMKPSPSNIQELYLESLEKLGINPLEHDIRFVEDNWENPSTGSAGLGWEVWLDGMEITQFTYFQQVGGLATSPVTAEVTYGLERLASYIQEVDSVYDIEWADGVKYGEIFIQPEYEHSKYSFEISDQEMLLENFDKFEKEAGRALEEGLVHPAYDYVLKCSHTFNLLDARGAVSVTERAGYIARIRNLARVVAKTFVAERKRLGYPLLDEETRVKLLAEDAE</sequence>
<evidence type="ECO:0000255" key="1">
    <source>
        <dbReference type="HAMAP-Rule" id="MF_00254"/>
    </source>
</evidence>
<keyword id="KW-0030">Aminoacyl-tRNA synthetase</keyword>
<keyword id="KW-0067">ATP-binding</keyword>
<keyword id="KW-0963">Cytoplasm</keyword>
<keyword id="KW-0436">Ligase</keyword>
<keyword id="KW-0547">Nucleotide-binding</keyword>
<keyword id="KW-0648">Protein biosynthesis</keyword>
<feature type="chain" id="PRO_1000125560" description="Glycine--tRNA ligase alpha subunit">
    <location>
        <begin position="1"/>
        <end position="305"/>
    </location>
</feature>
<accession>C1CF58</accession>
<reference key="1">
    <citation type="journal article" date="2010" name="Genome Biol.">
        <title>Structure and dynamics of the pan-genome of Streptococcus pneumoniae and closely related species.</title>
        <authorList>
            <person name="Donati C."/>
            <person name="Hiller N.L."/>
            <person name="Tettelin H."/>
            <person name="Muzzi A."/>
            <person name="Croucher N.J."/>
            <person name="Angiuoli S.V."/>
            <person name="Oggioni M."/>
            <person name="Dunning Hotopp J.C."/>
            <person name="Hu F.Z."/>
            <person name="Riley D.R."/>
            <person name="Covacci A."/>
            <person name="Mitchell T.J."/>
            <person name="Bentley S.D."/>
            <person name="Kilian M."/>
            <person name="Ehrlich G.D."/>
            <person name="Rappuoli R."/>
            <person name="Moxon E.R."/>
            <person name="Masignani V."/>
        </authorList>
    </citation>
    <scope>NUCLEOTIDE SEQUENCE [LARGE SCALE GENOMIC DNA]</scope>
    <source>
        <strain>JJA</strain>
    </source>
</reference>